<reference key="1">
    <citation type="journal article" date="2007" name="Toxicon">
        <title>Omega-Lsp-IA, a novel modulator of P-type Ca(2+) channels.</title>
        <authorList>
            <person name="Pluzhnikov K.A."/>
            <person name="Vassilevski A."/>
            <person name="Korolkova Y."/>
            <person name="Fisyunov A."/>
            <person name="Iegorova O."/>
            <person name="Krishtal O."/>
            <person name="Grishin E."/>
        </authorList>
    </citation>
    <scope>NUCLEOTIDE SEQUENCE [MRNA]</scope>
    <scope>PROTEIN SEQUENCE OF 41-87</scope>
    <scope>FUNCTION</scope>
    <scope>SUBCELLULAR LOCATION</scope>
    <scope>MASS SPECTROMETRY OF 41-87</scope>
    <source>
        <tissue>Venom</tissue>
        <tissue>Venom gland</tissue>
    </source>
</reference>
<reference key="2">
    <citation type="journal article" date="2005" name="Toxicology">
        <title>Novel spider toxin slows down the activation kinetics of P-type Ca2+ channels in Purkinje neurons of rat.</title>
        <authorList>
            <person name="Fisyunov A."/>
            <person name="Pluzhnikov K.A."/>
            <person name="Molyavka A."/>
            <person name="Grishin E.V."/>
            <person name="Lozovaya N."/>
            <person name="Krishtal O."/>
        </authorList>
    </citation>
    <scope>FUNCTION</scope>
</reference>
<accession>P85079</accession>
<accession>A9XDF9</accession>
<comment type="function">
    <text evidence="2 4 5">Modulates Cav2.1/CACNA1A voltage-gated calcium channels (P/Q-type currents) in rat cerebellar Purkinje cells and hippocampal CA1-CA3 neurons (PubMed:15590128, PubMed:17888477). At saturating concentrations (&gt;10 nM) decelerates activation kinetics and slightly increases peak amplitude without affecting deactivation kinetics (PubMed:15590128, PubMed:17888477). In vivo, does not cause death when intravenously injected into mice (By similarity). In rat models, through its activity on Cav2.1/CACNA1A, has an ameliorative effect on memory defects provoked by hyperstimulation of N-methyl-D-aspartate receptors (NMDARs) in the hippocampus (By similarity).</text>
</comment>
<comment type="subcellular location">
    <subcellularLocation>
        <location evidence="5">Secreted</location>
    </subcellularLocation>
</comment>
<comment type="tissue specificity">
    <text evidence="9">Expressed by the venom gland.</text>
</comment>
<comment type="domain">
    <text evidence="8">The presence of a 'disulfide through disulfide knot' structurally defines this protein as a knottin.</text>
</comment>
<comment type="mass spectrometry" mass="5623.7" error="0.5" method="MALDI" evidence="5"/>
<comment type="miscellaneous">
    <text evidence="8">According to the nomenclature proposed by King and colleagues (2008), 'Gsp(267)' comes from the species name 'Geolycosa sp (strain A267TDLS2-KZARNA)' (PubMed:17888477). This species has been reclassified since that study, as indicated in the work of Oparin and colleagues (2016) (PMID:27412961).</text>
</comment>
<comment type="miscellaneous">
    <text evidence="8">The primary structure of the mature protein is identical to the fragment sequence of Omega-lycotoxin-Lp1a from Lycosa praegrandis (AC P0DRA9).</text>
</comment>
<comment type="similarity">
    <text evidence="8">Belongs to the neurotoxin omega-lctx family.</text>
</comment>
<evidence type="ECO:0000250" key="1">
    <source>
        <dbReference type="UniProtKB" id="A0A0G3F8Z3"/>
    </source>
</evidence>
<evidence type="ECO:0000250" key="2">
    <source>
        <dbReference type="UniProtKB" id="P0DRA9"/>
    </source>
</evidence>
<evidence type="ECO:0000255" key="3"/>
<evidence type="ECO:0000269" key="4">
    <source>
    </source>
</evidence>
<evidence type="ECO:0000269" key="5">
    <source>
    </source>
</evidence>
<evidence type="ECO:0000303" key="6">
    <source>
    </source>
</evidence>
<evidence type="ECO:0000303" key="7">
    <source>
    </source>
</evidence>
<evidence type="ECO:0000305" key="8"/>
<evidence type="ECO:0000305" key="9">
    <source>
    </source>
</evidence>
<keyword id="KW-0108">Calcium channel impairing toxin</keyword>
<keyword id="KW-0903">Direct protein sequencing</keyword>
<keyword id="KW-1015">Disulfide bond</keyword>
<keyword id="KW-0872">Ion channel impairing toxin</keyword>
<keyword id="KW-0960">Knottin</keyword>
<keyword id="KW-0528">Neurotoxin</keyword>
<keyword id="KW-0964">Secreted</keyword>
<keyword id="KW-0732">Signal</keyword>
<keyword id="KW-0800">Toxin</keyword>
<keyword id="KW-1218">Voltage-gated calcium channel impairing toxin</keyword>
<sequence length="87" mass="10298">MKLSIFFVLFFIAIAYCQPEFLDDEEDEVEETLPVAEEGREKSCITWRNSCMHNDKGCCFPWSCVCWSQTVSRNSSRKEKKCQCRLW</sequence>
<name>TLCOA_ALOMR</name>
<protein>
    <recommendedName>
        <fullName evidence="8">Omega-lycotoxin-Am1a</fullName>
        <shortName evidence="8">Omega-LCTX-Am1a</shortName>
    </recommendedName>
    <alternativeName>
        <fullName evidence="6">Lsp-1</fullName>
    </alternativeName>
    <alternativeName>
        <fullName evidence="7">Omega-Lsp-IA</fullName>
    </alternativeName>
    <alternativeName>
        <fullName evidence="8">Omega-lycotoxin-Gsp(267)1a</fullName>
        <shortName evidence="8">Omega-LCTX-Gsp(267)1a</shortName>
    </alternativeName>
</protein>
<feature type="signal peptide" evidence="3">
    <location>
        <begin position="1"/>
        <end position="17"/>
    </location>
</feature>
<feature type="propeptide" id="PRO_0000388999" evidence="5">
    <location>
        <begin position="18"/>
        <end position="40"/>
    </location>
</feature>
<feature type="chain" id="PRO_0000306389" description="Omega-lycotoxin-Am1a" evidence="5">
    <location>
        <begin position="41"/>
        <end position="87"/>
    </location>
</feature>
<feature type="disulfide bond" evidence="1">
    <location>
        <begin position="44"/>
        <end position="59"/>
    </location>
</feature>
<feature type="disulfide bond" evidence="1">
    <location>
        <begin position="51"/>
        <end position="64"/>
    </location>
</feature>
<feature type="disulfide bond" evidence="1">
    <location>
        <begin position="58"/>
        <end position="84"/>
    </location>
</feature>
<feature type="disulfide bond" evidence="1">
    <location>
        <begin position="66"/>
        <end position="82"/>
    </location>
</feature>
<proteinExistence type="evidence at protein level"/>
<dbReference type="EMBL" id="EF187331">
    <property type="protein sequence ID" value="ABP68825.1"/>
    <property type="molecule type" value="mRNA"/>
</dbReference>
<dbReference type="TCDB" id="8.B.19.2.4">
    <property type="family name" value="the sea anemone k+ channel blocker toxin, bcstx3 (bcstx3) family"/>
</dbReference>
<dbReference type="ArachnoServer" id="AS000625">
    <property type="toxin name" value="omega-lycotoxin-Gsp2671a"/>
</dbReference>
<dbReference type="GO" id="GO:0005576">
    <property type="term" value="C:extracellular region"/>
    <property type="evidence" value="ECO:0007669"/>
    <property type="project" value="UniProtKB-SubCell"/>
</dbReference>
<dbReference type="GO" id="GO:0005246">
    <property type="term" value="F:calcium channel regulator activity"/>
    <property type="evidence" value="ECO:0007669"/>
    <property type="project" value="UniProtKB-KW"/>
</dbReference>
<dbReference type="GO" id="GO:0090729">
    <property type="term" value="F:toxin activity"/>
    <property type="evidence" value="ECO:0007669"/>
    <property type="project" value="UniProtKB-KW"/>
</dbReference>
<organism>
    <name type="scientific">Alopecosa marikovskyi</name>
    <name type="common">Wolf spider</name>
    <name type="synonym">Lycosa kazakhstanicus</name>
    <dbReference type="NCBI Taxonomy" id="2066572"/>
    <lineage>
        <taxon>Eukaryota</taxon>
        <taxon>Metazoa</taxon>
        <taxon>Ecdysozoa</taxon>
        <taxon>Arthropoda</taxon>
        <taxon>Chelicerata</taxon>
        <taxon>Arachnida</taxon>
        <taxon>Araneae</taxon>
        <taxon>Araneomorphae</taxon>
        <taxon>Entelegynae</taxon>
        <taxon>Lycosoidea</taxon>
        <taxon>Lycosidae</taxon>
        <taxon>Alopecosa</taxon>
    </lineage>
</organism>